<protein>
    <recommendedName>
        <fullName evidence="4">CAPA-Pyrokinin</fullName>
        <shortName evidence="4">CAPA-PK</shortName>
    </recommendedName>
    <alternativeName>
        <fullName evidence="1">FXPRL-amide</fullName>
    </alternativeName>
</protein>
<dbReference type="GO" id="GO:0005576">
    <property type="term" value="C:extracellular region"/>
    <property type="evidence" value="ECO:0007669"/>
    <property type="project" value="UniProtKB-SubCell"/>
</dbReference>
<dbReference type="GO" id="GO:0005184">
    <property type="term" value="F:neuropeptide hormone activity"/>
    <property type="evidence" value="ECO:0007669"/>
    <property type="project" value="InterPro"/>
</dbReference>
<dbReference type="GO" id="GO:0007218">
    <property type="term" value="P:neuropeptide signaling pathway"/>
    <property type="evidence" value="ECO:0007669"/>
    <property type="project" value="UniProtKB-KW"/>
</dbReference>
<dbReference type="InterPro" id="IPR001484">
    <property type="entry name" value="Pyrokinin_CS"/>
</dbReference>
<dbReference type="PROSITE" id="PS00539">
    <property type="entry name" value="PYROKININ"/>
    <property type="match status" value="1"/>
</dbReference>
<evidence type="ECO:0000250" key="1">
    <source>
        <dbReference type="UniProtKB" id="P82617"/>
    </source>
</evidence>
<evidence type="ECO:0000255" key="2"/>
<evidence type="ECO:0000269" key="3">
    <source>
    </source>
</evidence>
<evidence type="ECO:0000303" key="4">
    <source>
    </source>
</evidence>
<evidence type="ECO:0000305" key="5"/>
<evidence type="ECO:0000305" key="6">
    <source>
    </source>
</evidence>
<comment type="function">
    <text evidence="1">Myoactive.</text>
</comment>
<comment type="subcellular location">
    <subcellularLocation>
        <location evidence="6">Secreted</location>
    </subcellularLocation>
</comment>
<comment type="similarity">
    <text evidence="2">Belongs to the pyrokinin family.</text>
</comment>
<organism>
    <name type="scientific">Namaquaphasma ookiepense</name>
    <name type="common">Gladiator bug</name>
    <dbReference type="NCBI Taxonomy" id="409167"/>
    <lineage>
        <taxon>Eukaryota</taxon>
        <taxon>Metazoa</taxon>
        <taxon>Ecdysozoa</taxon>
        <taxon>Arthropoda</taxon>
        <taxon>Hexapoda</taxon>
        <taxon>Insecta</taxon>
        <taxon>Pterygota</taxon>
        <taxon>Neoptera</taxon>
        <taxon>Polyneoptera</taxon>
        <taxon>Mantophasmatodea</taxon>
        <taxon>Austrophasmatidae</taxon>
        <taxon>Namaquaphasma</taxon>
    </lineage>
</organism>
<name>PPK4_NAMOO</name>
<reference evidence="5" key="1">
    <citation type="journal article" date="2012" name="Syst. Biol.">
        <title>Peptidomics-based phylogeny and biogeography of Mantophasmatodea (Hexapoda).</title>
        <authorList>
            <person name="Predel R."/>
            <person name="Neupert S."/>
            <person name="Huetteroth W."/>
            <person name="Kahnt J."/>
            <person name="Waidelich D."/>
            <person name="Roth S."/>
        </authorList>
    </citation>
    <scope>PROTEIN SEQUENCE</scope>
    <scope>AMIDATION AT LEU-15</scope>
    <source>
        <tissue evidence="3">Abdominal perisympathetic organs</tissue>
    </source>
</reference>
<sequence length="15" mass="1495">SGGGEGSGMWFGPRL</sequence>
<accession>P86996</accession>
<feature type="peptide" id="PRO_0000420510" description="CAPA-Pyrokinin" evidence="3">
    <location>
        <begin position="1"/>
        <end position="15"/>
    </location>
</feature>
<feature type="modified residue" description="Leucine amide" evidence="3">
    <location>
        <position position="15"/>
    </location>
</feature>
<keyword id="KW-0027">Amidation</keyword>
<keyword id="KW-0903">Direct protein sequencing</keyword>
<keyword id="KW-0527">Neuropeptide</keyword>
<keyword id="KW-0964">Secreted</keyword>
<proteinExistence type="evidence at protein level"/>